<gene>
    <name evidence="1" type="primary">recA</name>
    <name type="ordered locus">SPs1798</name>
</gene>
<keyword id="KW-0067">ATP-binding</keyword>
<keyword id="KW-0963">Cytoplasm</keyword>
<keyword id="KW-0227">DNA damage</keyword>
<keyword id="KW-0233">DNA recombination</keyword>
<keyword id="KW-0234">DNA repair</keyword>
<keyword id="KW-0238">DNA-binding</keyword>
<keyword id="KW-0547">Nucleotide-binding</keyword>
<keyword id="KW-0742">SOS response</keyword>
<name>RECA_STRPQ</name>
<organism>
    <name type="scientific">Streptococcus pyogenes serotype M3 (strain SSI-1)</name>
    <dbReference type="NCBI Taxonomy" id="193567"/>
    <lineage>
        <taxon>Bacteria</taxon>
        <taxon>Bacillati</taxon>
        <taxon>Bacillota</taxon>
        <taxon>Bacilli</taxon>
        <taxon>Lactobacillales</taxon>
        <taxon>Streptococcaceae</taxon>
        <taxon>Streptococcus</taxon>
    </lineage>
</organism>
<sequence length="378" mass="40631">MAKKLKKNEEITKKFGDERRKALDDALKNIEKDFGKGAVMRLGERAEQKVQVMSSGSLALDIALGAGGYPKGRIIEIYGPESSGKTTVALHAVAQAQKEGGIAAFIDAEHALDPAYAAALGVNIDELLLSQPDSGEQGLEIAGKLIDSGAVDLVVVDSVAALVPRAEIDGDIGDSHVGLQARMMSQAMRKLSASINKTKTIAIFINQLREKVGVMFGNPETTPGGRALKFYASVRLDVRGTTQIKGTGDQKDSSIGKETKIKVVKNKVAPPFKVAEVEIMYGEGISRTGELVKIASDLDIIQKAGAWFSYNGEKIGQGSENAKRYLADHPQLFDEIDRKVRVKFGLLEESEEESAMAVASEETDDLALDLDNGIEIED</sequence>
<accession>P0DD83</accession>
<accession>Q8K5K0</accession>
<proteinExistence type="inferred from homology"/>
<reference key="1">
    <citation type="journal article" date="2003" name="Genome Res.">
        <title>Genome sequence of an M3 strain of Streptococcus pyogenes reveals a large-scale genomic rearrangement in invasive strains and new insights into phage evolution.</title>
        <authorList>
            <person name="Nakagawa I."/>
            <person name="Kurokawa K."/>
            <person name="Yamashita A."/>
            <person name="Nakata M."/>
            <person name="Tomiyasu Y."/>
            <person name="Okahashi N."/>
            <person name="Kawabata S."/>
            <person name="Yamazaki K."/>
            <person name="Shiba T."/>
            <person name="Yasunaga T."/>
            <person name="Hayashi H."/>
            <person name="Hattori M."/>
            <person name="Hamada S."/>
        </authorList>
    </citation>
    <scope>NUCLEOTIDE SEQUENCE [LARGE SCALE GENOMIC DNA]</scope>
    <source>
        <strain>SSI-1</strain>
    </source>
</reference>
<protein>
    <recommendedName>
        <fullName evidence="1">Protein RecA</fullName>
    </recommendedName>
    <alternativeName>
        <fullName evidence="1">Recombinase A</fullName>
    </alternativeName>
</protein>
<dbReference type="EMBL" id="BA000034">
    <property type="protein sequence ID" value="BAC64893.1"/>
    <property type="molecule type" value="Genomic_DNA"/>
</dbReference>
<dbReference type="RefSeq" id="WP_002992179.1">
    <property type="nucleotide sequence ID" value="NC_004606.1"/>
</dbReference>
<dbReference type="SMR" id="P0DD83"/>
<dbReference type="GeneID" id="69901570"/>
<dbReference type="KEGG" id="sps:SPs1798"/>
<dbReference type="HOGENOM" id="CLU_040469_3_2_9"/>
<dbReference type="GO" id="GO:0005829">
    <property type="term" value="C:cytosol"/>
    <property type="evidence" value="ECO:0007669"/>
    <property type="project" value="TreeGrafter"/>
</dbReference>
<dbReference type="GO" id="GO:0005524">
    <property type="term" value="F:ATP binding"/>
    <property type="evidence" value="ECO:0007669"/>
    <property type="project" value="UniProtKB-UniRule"/>
</dbReference>
<dbReference type="GO" id="GO:0016887">
    <property type="term" value="F:ATP hydrolysis activity"/>
    <property type="evidence" value="ECO:0007669"/>
    <property type="project" value="InterPro"/>
</dbReference>
<dbReference type="GO" id="GO:0140664">
    <property type="term" value="F:ATP-dependent DNA damage sensor activity"/>
    <property type="evidence" value="ECO:0007669"/>
    <property type="project" value="InterPro"/>
</dbReference>
<dbReference type="GO" id="GO:0003684">
    <property type="term" value="F:damaged DNA binding"/>
    <property type="evidence" value="ECO:0007669"/>
    <property type="project" value="UniProtKB-UniRule"/>
</dbReference>
<dbReference type="GO" id="GO:0003697">
    <property type="term" value="F:single-stranded DNA binding"/>
    <property type="evidence" value="ECO:0007669"/>
    <property type="project" value="UniProtKB-UniRule"/>
</dbReference>
<dbReference type="GO" id="GO:0006310">
    <property type="term" value="P:DNA recombination"/>
    <property type="evidence" value="ECO:0007669"/>
    <property type="project" value="UniProtKB-UniRule"/>
</dbReference>
<dbReference type="GO" id="GO:0006281">
    <property type="term" value="P:DNA repair"/>
    <property type="evidence" value="ECO:0007669"/>
    <property type="project" value="UniProtKB-UniRule"/>
</dbReference>
<dbReference type="GO" id="GO:0009432">
    <property type="term" value="P:SOS response"/>
    <property type="evidence" value="ECO:0007669"/>
    <property type="project" value="UniProtKB-UniRule"/>
</dbReference>
<dbReference type="CDD" id="cd00983">
    <property type="entry name" value="RecA"/>
    <property type="match status" value="1"/>
</dbReference>
<dbReference type="FunFam" id="3.40.50.300:FF:000087">
    <property type="entry name" value="Recombinase RecA"/>
    <property type="match status" value="1"/>
</dbReference>
<dbReference type="Gene3D" id="3.40.50.300">
    <property type="entry name" value="P-loop containing nucleotide triphosphate hydrolases"/>
    <property type="match status" value="1"/>
</dbReference>
<dbReference type="HAMAP" id="MF_00268">
    <property type="entry name" value="RecA"/>
    <property type="match status" value="1"/>
</dbReference>
<dbReference type="InterPro" id="IPR003593">
    <property type="entry name" value="AAA+_ATPase"/>
</dbReference>
<dbReference type="InterPro" id="IPR013765">
    <property type="entry name" value="DNA_recomb/repair_RecA"/>
</dbReference>
<dbReference type="InterPro" id="IPR020584">
    <property type="entry name" value="DNA_recomb/repair_RecA_CS"/>
</dbReference>
<dbReference type="InterPro" id="IPR027417">
    <property type="entry name" value="P-loop_NTPase"/>
</dbReference>
<dbReference type="InterPro" id="IPR049261">
    <property type="entry name" value="RecA-like_C"/>
</dbReference>
<dbReference type="InterPro" id="IPR049428">
    <property type="entry name" value="RecA-like_N"/>
</dbReference>
<dbReference type="InterPro" id="IPR020588">
    <property type="entry name" value="RecA_ATP-bd"/>
</dbReference>
<dbReference type="InterPro" id="IPR023400">
    <property type="entry name" value="RecA_C_sf"/>
</dbReference>
<dbReference type="InterPro" id="IPR020587">
    <property type="entry name" value="RecA_monomer-monomer_interface"/>
</dbReference>
<dbReference type="NCBIfam" id="TIGR02012">
    <property type="entry name" value="tigrfam_recA"/>
    <property type="match status" value="1"/>
</dbReference>
<dbReference type="PANTHER" id="PTHR45900:SF1">
    <property type="entry name" value="MITOCHONDRIAL DNA REPAIR PROTEIN RECA HOMOLOG-RELATED"/>
    <property type="match status" value="1"/>
</dbReference>
<dbReference type="PANTHER" id="PTHR45900">
    <property type="entry name" value="RECA"/>
    <property type="match status" value="1"/>
</dbReference>
<dbReference type="Pfam" id="PF00154">
    <property type="entry name" value="RecA"/>
    <property type="match status" value="1"/>
</dbReference>
<dbReference type="Pfam" id="PF21096">
    <property type="entry name" value="RecA_C"/>
    <property type="match status" value="1"/>
</dbReference>
<dbReference type="PRINTS" id="PR00142">
    <property type="entry name" value="RECA"/>
</dbReference>
<dbReference type="SMART" id="SM00382">
    <property type="entry name" value="AAA"/>
    <property type="match status" value="1"/>
</dbReference>
<dbReference type="SUPFAM" id="SSF52540">
    <property type="entry name" value="P-loop containing nucleoside triphosphate hydrolases"/>
    <property type="match status" value="1"/>
</dbReference>
<dbReference type="SUPFAM" id="SSF54752">
    <property type="entry name" value="RecA protein, C-terminal domain"/>
    <property type="match status" value="1"/>
</dbReference>
<dbReference type="PROSITE" id="PS00321">
    <property type="entry name" value="RECA_1"/>
    <property type="match status" value="1"/>
</dbReference>
<dbReference type="PROSITE" id="PS50162">
    <property type="entry name" value="RECA_2"/>
    <property type="match status" value="1"/>
</dbReference>
<dbReference type="PROSITE" id="PS50163">
    <property type="entry name" value="RECA_3"/>
    <property type="match status" value="1"/>
</dbReference>
<feature type="chain" id="PRO_0000411481" description="Protein RecA">
    <location>
        <begin position="1"/>
        <end position="378"/>
    </location>
</feature>
<feature type="binding site" evidence="1">
    <location>
        <begin position="79"/>
        <end position="86"/>
    </location>
    <ligand>
        <name>ATP</name>
        <dbReference type="ChEBI" id="CHEBI:30616"/>
    </ligand>
</feature>
<evidence type="ECO:0000255" key="1">
    <source>
        <dbReference type="HAMAP-Rule" id="MF_00268"/>
    </source>
</evidence>
<comment type="function">
    <text evidence="1">Can catalyze the hydrolysis of ATP in the presence of single-stranded DNA, the ATP-dependent uptake of single-stranded DNA by duplex DNA, and the ATP-dependent hybridization of homologous single-stranded DNAs. It interacts with LexA causing its activation and leading to its autocatalytic cleavage.</text>
</comment>
<comment type="subcellular location">
    <subcellularLocation>
        <location evidence="1">Cytoplasm</location>
    </subcellularLocation>
</comment>
<comment type="similarity">
    <text evidence="1">Belongs to the RecA family.</text>
</comment>